<feature type="chain" id="PRO_1000005109" description="Small ribosomal subunit protein bS21">
    <location>
        <begin position="1"/>
        <end position="58"/>
    </location>
</feature>
<feature type="region of interest" description="Disordered" evidence="2">
    <location>
        <begin position="32"/>
        <end position="58"/>
    </location>
</feature>
<feature type="compositionally biased region" description="Basic and acidic residues" evidence="2">
    <location>
        <begin position="32"/>
        <end position="42"/>
    </location>
</feature>
<feature type="compositionally biased region" description="Basic residues" evidence="2">
    <location>
        <begin position="43"/>
        <end position="58"/>
    </location>
</feature>
<dbReference type="EMBL" id="CP000726">
    <property type="protein sequence ID" value="ABS33255.1"/>
    <property type="molecule type" value="Genomic_DNA"/>
</dbReference>
<dbReference type="RefSeq" id="WP_003357777.1">
    <property type="nucleotide sequence ID" value="NC_009697.1"/>
</dbReference>
<dbReference type="SMR" id="A7FXK9"/>
<dbReference type="GeneID" id="92939674"/>
<dbReference type="KEGG" id="cba:CLB_2917"/>
<dbReference type="HOGENOM" id="CLU_159258_1_2_9"/>
<dbReference type="GO" id="GO:1990904">
    <property type="term" value="C:ribonucleoprotein complex"/>
    <property type="evidence" value="ECO:0007669"/>
    <property type="project" value="UniProtKB-KW"/>
</dbReference>
<dbReference type="GO" id="GO:0005840">
    <property type="term" value="C:ribosome"/>
    <property type="evidence" value="ECO:0007669"/>
    <property type="project" value="UniProtKB-KW"/>
</dbReference>
<dbReference type="GO" id="GO:0003735">
    <property type="term" value="F:structural constituent of ribosome"/>
    <property type="evidence" value="ECO:0007669"/>
    <property type="project" value="InterPro"/>
</dbReference>
<dbReference type="GO" id="GO:0006412">
    <property type="term" value="P:translation"/>
    <property type="evidence" value="ECO:0007669"/>
    <property type="project" value="UniProtKB-UniRule"/>
</dbReference>
<dbReference type="Gene3D" id="1.20.5.1150">
    <property type="entry name" value="Ribosomal protein S8"/>
    <property type="match status" value="1"/>
</dbReference>
<dbReference type="HAMAP" id="MF_00358">
    <property type="entry name" value="Ribosomal_bS21"/>
    <property type="match status" value="1"/>
</dbReference>
<dbReference type="InterPro" id="IPR001911">
    <property type="entry name" value="Ribosomal_bS21"/>
</dbReference>
<dbReference type="InterPro" id="IPR018278">
    <property type="entry name" value="Ribosomal_bS21_CS"/>
</dbReference>
<dbReference type="InterPro" id="IPR038380">
    <property type="entry name" value="Ribosomal_bS21_sf"/>
</dbReference>
<dbReference type="NCBIfam" id="TIGR00030">
    <property type="entry name" value="S21p"/>
    <property type="match status" value="1"/>
</dbReference>
<dbReference type="PANTHER" id="PTHR21109">
    <property type="entry name" value="MITOCHONDRIAL 28S RIBOSOMAL PROTEIN S21"/>
    <property type="match status" value="1"/>
</dbReference>
<dbReference type="PANTHER" id="PTHR21109:SF22">
    <property type="entry name" value="SMALL RIBOSOMAL SUBUNIT PROTEIN BS21"/>
    <property type="match status" value="1"/>
</dbReference>
<dbReference type="Pfam" id="PF01165">
    <property type="entry name" value="Ribosomal_S21"/>
    <property type="match status" value="1"/>
</dbReference>
<dbReference type="PRINTS" id="PR00976">
    <property type="entry name" value="RIBOSOMALS21"/>
</dbReference>
<dbReference type="PROSITE" id="PS01181">
    <property type="entry name" value="RIBOSOMAL_S21"/>
    <property type="match status" value="1"/>
</dbReference>
<organism>
    <name type="scientific">Clostridium botulinum (strain ATCC 19397 / Type A)</name>
    <dbReference type="NCBI Taxonomy" id="441770"/>
    <lineage>
        <taxon>Bacteria</taxon>
        <taxon>Bacillati</taxon>
        <taxon>Bacillota</taxon>
        <taxon>Clostridia</taxon>
        <taxon>Eubacteriales</taxon>
        <taxon>Clostridiaceae</taxon>
        <taxon>Clostridium</taxon>
    </lineage>
</organism>
<evidence type="ECO:0000255" key="1">
    <source>
        <dbReference type="HAMAP-Rule" id="MF_00358"/>
    </source>
</evidence>
<evidence type="ECO:0000256" key="2">
    <source>
        <dbReference type="SAM" id="MobiDB-lite"/>
    </source>
</evidence>
<evidence type="ECO:0000305" key="3"/>
<keyword id="KW-0687">Ribonucleoprotein</keyword>
<keyword id="KW-0689">Ribosomal protein</keyword>
<sequence length="58" mass="6847">MSEIKVGENESLENALRRFKKKCARAGVLSEVRKREHYEKPSVKKKKKSEAARKRKFK</sequence>
<accession>A7FXK9</accession>
<proteinExistence type="inferred from homology"/>
<reference key="1">
    <citation type="journal article" date="2007" name="PLoS ONE">
        <title>Analysis of the neurotoxin complex genes in Clostridium botulinum A1-A4 and B1 strains: BoNT/A3, /Ba4 and /B1 clusters are located within plasmids.</title>
        <authorList>
            <person name="Smith T.J."/>
            <person name="Hill K.K."/>
            <person name="Foley B.T."/>
            <person name="Detter J.C."/>
            <person name="Munk A.C."/>
            <person name="Bruce D.C."/>
            <person name="Doggett N.A."/>
            <person name="Smith L.A."/>
            <person name="Marks J.D."/>
            <person name="Xie G."/>
            <person name="Brettin T.S."/>
        </authorList>
    </citation>
    <scope>NUCLEOTIDE SEQUENCE [LARGE SCALE GENOMIC DNA]</scope>
    <source>
        <strain>ATCC 19397 / Type A</strain>
    </source>
</reference>
<name>RS21_CLOB1</name>
<protein>
    <recommendedName>
        <fullName evidence="1">Small ribosomal subunit protein bS21</fullName>
    </recommendedName>
    <alternativeName>
        <fullName evidence="3">30S ribosomal protein S21</fullName>
    </alternativeName>
</protein>
<gene>
    <name evidence="1" type="primary">rpsU</name>
    <name type="ordered locus">CLB_2917</name>
</gene>
<comment type="similarity">
    <text evidence="1">Belongs to the bacterial ribosomal protein bS21 family.</text>
</comment>